<comment type="function">
    <text evidence="1">Isoform 3 can transactivate the human immunodeficiency virus type 1 promoter.</text>
</comment>
<comment type="alternative products">
    <event type="alternative splicing"/>
    <isoform>
        <id>Q69551-1</id>
        <name>1</name>
        <name>Protein U17/U16</name>
        <name>Protein U16exon1-2</name>
        <sequence type="displayed"/>
    </isoform>
    <isoform>
        <id>Q69552-1</id>
        <name>2</name>
        <name>Protein U17</name>
        <name>EFLF1</name>
        <sequence type="external"/>
    </isoform>
    <isoform>
        <id>Q69551-2</id>
        <name>3</name>
        <name>Protein U16</name>
        <name>EFLF2</name>
        <sequence type="described" ref="VSP_034621"/>
    </isoform>
</comment>
<comment type="similarity">
    <text evidence="2">Belongs to the herpesviridae US22 family.</text>
</comment>
<comment type="sequence caution" evidence="2">
    <conflict type="erroneous gene model prediction">
        <sequence resource="EMBL-CDS" id="AAA16721"/>
    </conflict>
</comment>
<sequence length="334" mass="38493">MADERTSDSVKTRYDIALMKLNDIKIAVFRDSLSTYVEQKTGLTIQFNWPKSRCLVISTLCKIPFPTKSAAELQEMCSLLLCCPERLQLLGYVSVWGEETRDVCLTKTLVFAGEDEKFYGLDFVNETLYLLAETTERFAVLGLRRYDPVYREKDIRFLTKIDDVLQSLIDAQDNLWKFATIVYKNSGRHYIMKSCLENNDGVFVLFLTRKEDFPSRMEWNFFSDVYESMPYDGQVIGSIGKTLLYPKTMFVMMDLSGAIYGIDTIGTGIGSCVKIADDFESFLRQGIVRGYRRYKFFHRNINTVQEILPLCPHTSLGPTFSNNYIYDLSSEDDE</sequence>
<name>U16_HHV6U</name>
<protein>
    <recommendedName>
        <fullName>Protein U17/U16</fullName>
    </recommendedName>
</protein>
<organism>
    <name type="scientific">Human herpesvirus 6A (strain Uganda-1102)</name>
    <name type="common">HHV-6 variant A</name>
    <name type="synonym">Human B lymphotropic virus</name>
    <dbReference type="NCBI Taxonomy" id="10370"/>
    <lineage>
        <taxon>Viruses</taxon>
        <taxon>Duplodnaviria</taxon>
        <taxon>Heunggongvirae</taxon>
        <taxon>Peploviricota</taxon>
        <taxon>Herviviricetes</taxon>
        <taxon>Herpesvirales</taxon>
        <taxon>Orthoherpesviridae</taxon>
        <taxon>Betaherpesvirinae</taxon>
        <taxon>Roseolovirus</taxon>
        <taxon>Roseolovirus humanbeta6a</taxon>
        <taxon>Human betaherpesvirus 6A</taxon>
    </lineage>
</organism>
<reference key="1">
    <citation type="journal article" date="1994" name="J. Virol.">
        <title>Nucleotide sequence analysis of a 38.5-kilobase-pair region of the genome of human herpesvirus 6 encoding human cytomegalovirus immediate-early gene homologs and transactivating functions.</title>
        <authorList>
            <person name="Nicholas J."/>
            <person name="Martin M.E.D."/>
        </authorList>
    </citation>
    <scope>NUCLEOTIDE SEQUENCE [GENOMIC DNA]</scope>
    <scope>ALTERNATIVE SPLICING (ISOFORMS 2 AND 3)</scope>
</reference>
<reference key="2">
    <citation type="journal article" date="1995" name="Virology">
        <title>The DNA sequence of human herpesvirus-6: structure, coding content, and genome evolution.</title>
        <authorList>
            <person name="Gompels U.A."/>
            <person name="Nicholas J."/>
            <person name="Lawrence G.L."/>
            <person name="Jones M."/>
            <person name="Thomson B.J."/>
            <person name="Martin M.E.D."/>
            <person name="Efstathiou S."/>
            <person name="Craxton M.A."/>
            <person name="Macaulay H.A."/>
        </authorList>
    </citation>
    <scope>NUCLEOTIDE SEQUENCE [LARGE SCALE GENOMIC DNA]</scope>
</reference>
<reference key="3">
    <citation type="journal article" date="2000" name="J. Virol.">
        <title>Characterization of transcripts expressed from human herpesvirus 6A strain GS immediate-early region B U16-U17 open reading frames.</title>
        <authorList>
            <person name="Flebbe-Rehwaldt L.M."/>
            <person name="Wood C."/>
            <person name="Chandran B."/>
        </authorList>
    </citation>
    <scope>ALTERNATIVE SPLICING</scope>
</reference>
<keyword id="KW-0010">Activator</keyword>
<keyword id="KW-0025">Alternative splicing</keyword>
<keyword id="KW-1185">Reference proteome</keyword>
<keyword id="KW-0804">Transcription</keyword>
<keyword id="KW-0805">Transcription regulation</keyword>
<gene>
    <name type="primary">U17/U16</name>
</gene>
<accession>Q69551</accession>
<accession>Q76VQ2</accession>
<accession>Q89432</accession>
<proteinExistence type="inferred from homology"/>
<evidence type="ECO:0000250" key="1"/>
<evidence type="ECO:0000305" key="2"/>
<feature type="chain" id="PRO_0000343647" description="Protein U17/U16">
    <location>
        <begin position="1"/>
        <end position="334"/>
    </location>
</feature>
<feature type="splice variant" id="VSP_034621" description="In isoform 3." evidence="2">
    <location>
        <begin position="1"/>
        <end position="191"/>
    </location>
</feature>
<feature type="sequence conflict" description="In Ref. 1; M81789." evidence="2" ref="1">
    <original>Y</original>
    <variation>C</variation>
    <location>
        <position position="226"/>
    </location>
</feature>
<feature type="sequence conflict" description="In Ref. 1; M81789." evidence="2" ref="1">
    <original>D</original>
    <variation>H</variation>
    <location>
        <position position="232"/>
    </location>
</feature>
<feature type="sequence conflict" description="In Ref. 1; M81789." evidence="2" ref="1">
    <original>N</original>
    <variation>S</variation>
    <location>
        <position position="302"/>
    </location>
</feature>
<feature type="sequence conflict" description="In Ref. 1; M81789." evidence="2" ref="1">
    <original>I</original>
    <variation>N</variation>
    <location>
        <position position="325"/>
    </location>
</feature>
<dbReference type="EMBL" id="M81789">
    <property type="status" value="NOT_ANNOTATED_CDS"/>
    <property type="molecule type" value="Genomic_DNA"/>
</dbReference>
<dbReference type="EMBL" id="L25528">
    <property type="protein sequence ID" value="AAA16721.1"/>
    <property type="status" value="ALT_SEQ"/>
    <property type="molecule type" value="Genomic_DNA"/>
</dbReference>
<dbReference type="EMBL" id="X83413">
    <property type="protein sequence ID" value="CAA58397.2"/>
    <property type="molecule type" value="Genomic_DNA"/>
</dbReference>
<dbReference type="PIR" id="T09308">
    <property type="entry name" value="T09308"/>
</dbReference>
<dbReference type="RefSeq" id="NP_042910.2">
    <property type="nucleotide sequence ID" value="NC_001664.2"/>
</dbReference>
<dbReference type="KEGG" id="vg:1487923"/>
<dbReference type="Proteomes" id="UP000009295">
    <property type="component" value="Segment"/>
</dbReference>
<dbReference type="InterPro" id="IPR003360">
    <property type="entry name" value="US22-like"/>
</dbReference>
<dbReference type="Pfam" id="PF02393">
    <property type="entry name" value="US22"/>
    <property type="match status" value="1"/>
</dbReference>
<organismHost>
    <name type="scientific">Homo sapiens</name>
    <name type="common">Human</name>
    <dbReference type="NCBI Taxonomy" id="9606"/>
</organismHost>